<evidence type="ECO:0000255" key="1">
    <source>
        <dbReference type="HAMAP-Rule" id="MF_01606"/>
    </source>
</evidence>
<organism>
    <name type="scientific">Dickeya chrysanthemi (strain Ech1591)</name>
    <name type="common">Dickeya zeae (strain Ech1591)</name>
    <dbReference type="NCBI Taxonomy" id="561229"/>
    <lineage>
        <taxon>Bacteria</taxon>
        <taxon>Pseudomonadati</taxon>
        <taxon>Pseudomonadota</taxon>
        <taxon>Gammaproteobacteria</taxon>
        <taxon>Enterobacterales</taxon>
        <taxon>Pectobacteriaceae</taxon>
        <taxon>Dickeya</taxon>
    </lineage>
</organism>
<reference key="1">
    <citation type="submission" date="2009-06" db="EMBL/GenBank/DDBJ databases">
        <title>Complete sequence of Dickeya zeae Ech1591.</title>
        <authorList>
            <consortium name="US DOE Joint Genome Institute"/>
            <person name="Lucas S."/>
            <person name="Copeland A."/>
            <person name="Lapidus A."/>
            <person name="Glavina del Rio T."/>
            <person name="Tice H."/>
            <person name="Bruce D."/>
            <person name="Goodwin L."/>
            <person name="Pitluck S."/>
            <person name="Chertkov O."/>
            <person name="Brettin T."/>
            <person name="Detter J.C."/>
            <person name="Han C."/>
            <person name="Larimer F."/>
            <person name="Land M."/>
            <person name="Hauser L."/>
            <person name="Kyrpides N."/>
            <person name="Ovchinnikova G."/>
            <person name="Balakrishnan V."/>
            <person name="Glasner J."/>
            <person name="Perna N.T."/>
        </authorList>
    </citation>
    <scope>NUCLEOTIDE SEQUENCE [LARGE SCALE GENOMIC DNA]</scope>
    <source>
        <strain>Ech1591</strain>
    </source>
</reference>
<accession>C6CL12</accession>
<dbReference type="EMBL" id="CP001655">
    <property type="protein sequence ID" value="ACT05661.1"/>
    <property type="molecule type" value="Genomic_DNA"/>
</dbReference>
<dbReference type="RefSeq" id="WP_012768540.1">
    <property type="nucleotide sequence ID" value="NC_012912.1"/>
</dbReference>
<dbReference type="SMR" id="C6CL12"/>
<dbReference type="STRING" id="561229.Dd1591_0782"/>
<dbReference type="GeneID" id="45078897"/>
<dbReference type="KEGG" id="dze:Dd1591_0782"/>
<dbReference type="eggNOG" id="COG2846">
    <property type="taxonomic scope" value="Bacteria"/>
</dbReference>
<dbReference type="HOGENOM" id="CLU_076075_2_0_6"/>
<dbReference type="OrthoDB" id="9797132at2"/>
<dbReference type="Proteomes" id="UP000002735">
    <property type="component" value="Chromosome"/>
</dbReference>
<dbReference type="GO" id="GO:0005737">
    <property type="term" value="C:cytoplasm"/>
    <property type="evidence" value="ECO:0007669"/>
    <property type="project" value="UniProtKB-SubCell"/>
</dbReference>
<dbReference type="GO" id="GO:0046872">
    <property type="term" value="F:metal ion binding"/>
    <property type="evidence" value="ECO:0007669"/>
    <property type="project" value="UniProtKB-KW"/>
</dbReference>
<dbReference type="GO" id="GO:0030091">
    <property type="term" value="P:protein repair"/>
    <property type="evidence" value="ECO:0007669"/>
    <property type="project" value="UniProtKB-UniRule"/>
</dbReference>
<dbReference type="GO" id="GO:0051409">
    <property type="term" value="P:response to nitrosative stress"/>
    <property type="evidence" value="ECO:0007669"/>
    <property type="project" value="UniProtKB-UniRule"/>
</dbReference>
<dbReference type="GO" id="GO:0006979">
    <property type="term" value="P:response to oxidative stress"/>
    <property type="evidence" value="ECO:0007669"/>
    <property type="project" value="UniProtKB-UniRule"/>
</dbReference>
<dbReference type="CDD" id="cd12108">
    <property type="entry name" value="Hr-like"/>
    <property type="match status" value="1"/>
</dbReference>
<dbReference type="Gene3D" id="1.20.120.520">
    <property type="entry name" value="nmb1532 protein domain like"/>
    <property type="match status" value="1"/>
</dbReference>
<dbReference type="HAMAP" id="MF_01606">
    <property type="entry name" value="RIC_YtfE"/>
    <property type="match status" value="1"/>
</dbReference>
<dbReference type="InterPro" id="IPR023742">
    <property type="entry name" value="FeS-repair_YftE"/>
</dbReference>
<dbReference type="InterPro" id="IPR012312">
    <property type="entry name" value="Hemerythrin-like"/>
</dbReference>
<dbReference type="InterPro" id="IPR019903">
    <property type="entry name" value="RIC_family"/>
</dbReference>
<dbReference type="NCBIfam" id="TIGR03652">
    <property type="entry name" value="FeS_repair_RIC"/>
    <property type="match status" value="1"/>
</dbReference>
<dbReference type="NCBIfam" id="NF008221">
    <property type="entry name" value="PRK10992.1"/>
    <property type="match status" value="1"/>
</dbReference>
<dbReference type="PANTHER" id="PTHR36438">
    <property type="entry name" value="IRON-SULFUR CLUSTER REPAIR PROTEIN YTFE"/>
    <property type="match status" value="1"/>
</dbReference>
<dbReference type="PANTHER" id="PTHR36438:SF1">
    <property type="entry name" value="IRON-SULFUR CLUSTER REPAIR PROTEIN YTFE"/>
    <property type="match status" value="1"/>
</dbReference>
<dbReference type="Pfam" id="PF01814">
    <property type="entry name" value="Hemerythrin"/>
    <property type="match status" value="1"/>
</dbReference>
<dbReference type="Pfam" id="PF04405">
    <property type="entry name" value="ScdA_N"/>
    <property type="match status" value="1"/>
</dbReference>
<proteinExistence type="inferred from homology"/>
<keyword id="KW-0963">Cytoplasm</keyword>
<keyword id="KW-0408">Iron</keyword>
<keyword id="KW-0479">Metal-binding</keyword>
<keyword id="KW-0346">Stress response</keyword>
<gene>
    <name evidence="1" type="primary">ytfE</name>
    <name type="ordered locus">Dd1591_0782</name>
</gene>
<feature type="chain" id="PRO_0000406126" description="Iron-sulfur cluster repair protein YtfE">
    <location>
        <begin position="1"/>
        <end position="221"/>
    </location>
</feature>
<sequence length="221" mass="25159">MHYRDQSLGELAITIPRATALFREFNLDFCCGGKQTLLRAATKRALDIDMLESRLADLSTQPSTEKDWQQASLGEMIVHIISRFHDRHRAQLPELIRMAEKVERVHHDKPGCPIGLTDQLTLIHDDLTQHMMKEERILFPMIQSGMGTQAGGPISVMEHEHDDAGQQLDVIKSLTNDVTPPDNACTTWRALYTGINEFIDDLMEHIHLENNQLFPRALRGE</sequence>
<protein>
    <recommendedName>
        <fullName evidence="1">Iron-sulfur cluster repair protein YtfE</fullName>
    </recommendedName>
</protein>
<name>YTFE_DICC1</name>
<comment type="function">
    <text evidence="1">Di-iron-containing protein involved in the repair of iron-sulfur clusters damaged by oxidative and nitrosative stress conditions.</text>
</comment>
<comment type="subunit">
    <text evidence="1">Homodimer.</text>
</comment>
<comment type="subcellular location">
    <subcellularLocation>
        <location evidence="1">Cytoplasm</location>
    </subcellularLocation>
</comment>
<comment type="similarity">
    <text evidence="1">Belongs to the RIC family. YtfE subfamily.</text>
</comment>